<protein>
    <recommendedName>
        <fullName evidence="1">UPF0182 protein tll1193</fullName>
    </recommendedName>
</protein>
<evidence type="ECO:0000255" key="1">
    <source>
        <dbReference type="HAMAP-Rule" id="MF_01600"/>
    </source>
</evidence>
<proteinExistence type="inferred from homology"/>
<keyword id="KW-1003">Cell membrane</keyword>
<keyword id="KW-0472">Membrane</keyword>
<keyword id="KW-1185">Reference proteome</keyword>
<keyword id="KW-0812">Transmembrane</keyword>
<keyword id="KW-1133">Transmembrane helix</keyword>
<sequence>MPSLSVVPLMPPWLRWLCGLVLAIALGVGLCRLIAESLWFHQLGYLEVVWQRWSVQALLFLAVAGVSQLFYGCQQQWLLRQRTVTLDPALRAQSTYRGLGLWQLLLCAGSLNWLLIVATYHIGAIALQLWQQRSEMTFNSPLLPQLSVWRVAELSLQMVQTPWLLGLSLVAVILGLWLPVGLFQGLGILLSLAMGAIASLSWPVVLKGLFAASDPHTEPLFRHSISFYLFQIPLWELLRLWLVNLSVVGLGGTTLGYLLANESLSHGKFLGFVRSQRRHLQGLSAFVFATVALSFWLERYKLLYSTKGAAFGAGYTDVTVRLPLYGWLSASAFGVACLLAWSAIRRGGEQRRLGPIAPGLFGFTLGYLGVILIVDWLLPTAIEAAIVQPNQLQRELPYIQRTITHTREGFNLEKMRVEPFQPENNLNAEILAANAATTRNIRLWDTRPLLETNRQLQQLRSYYRFPAAFLDRYSLKLAPDQDQSEIRQVLIAAREVDYSAVQQFARSWINEHLVFTHGYGFTMSPVNTAEANGLPKYFVRDIGDTGQLLVNPPQIRESISFFYPRIYYGELTNTYIFVPSEVPELDFPRGTENVYNHYDGTGGVPIASWWRRLVYSVYFRDWQLLLTPNLRPDSRVLFRRLIQDRVRAIAPFLRFDSEPYLVVADPRSEQEIAPRPSTAGVNYLYWMIDAYTVSRYYPYSDPGEHSFNYIRNSVKVVVDAYNGDVTFYVVEPEDVMIRTWQRIFPTLFHPLSAMPHQLYRHIRYPIDLLQVQSEQLLKYHMSDPVVFYNREDLWQIPKEIYREKPQAVAPYYLITKLPIGATEEFILLVPFTPVNRPNLIGWLAARSDGENYGKLLLYVFPKQELVFGPEQMEARINQDPVISQQISLWNRQGSRSVQGNLLIIPIQRSLLYVEPIYLEADQNRLPTLARVIVMDNQRIVMAPTLEEALKQLFPQ</sequence>
<gene>
    <name type="ordered locus">tll1193</name>
</gene>
<name>Y1193_THEVB</name>
<organism>
    <name type="scientific">Thermosynechococcus vestitus (strain NIES-2133 / IAM M-273 / BP-1)</name>
    <dbReference type="NCBI Taxonomy" id="197221"/>
    <lineage>
        <taxon>Bacteria</taxon>
        <taxon>Bacillati</taxon>
        <taxon>Cyanobacteriota</taxon>
        <taxon>Cyanophyceae</taxon>
        <taxon>Acaryochloridales</taxon>
        <taxon>Thermosynechococcaceae</taxon>
        <taxon>Thermosynechococcus</taxon>
    </lineage>
</organism>
<accession>Q8DJM9</accession>
<comment type="subcellular location">
    <subcellularLocation>
        <location evidence="1">Cell membrane</location>
        <topology evidence="1">Multi-pass membrane protein</topology>
    </subcellularLocation>
</comment>
<comment type="similarity">
    <text evidence="1">Belongs to the UPF0182 family.</text>
</comment>
<dbReference type="EMBL" id="BA000039">
    <property type="protein sequence ID" value="BAC08745.1"/>
    <property type="molecule type" value="Genomic_DNA"/>
</dbReference>
<dbReference type="RefSeq" id="NP_681983.1">
    <property type="nucleotide sequence ID" value="NC_004113.1"/>
</dbReference>
<dbReference type="RefSeq" id="WP_011057035.1">
    <property type="nucleotide sequence ID" value="NC_004113.1"/>
</dbReference>
<dbReference type="STRING" id="197221.gene:10747788"/>
<dbReference type="EnsemblBacteria" id="BAC08745">
    <property type="protein sequence ID" value="BAC08745"/>
    <property type="gene ID" value="BAC08745"/>
</dbReference>
<dbReference type="KEGG" id="tel:tll1193"/>
<dbReference type="PATRIC" id="fig|197221.4.peg.1255"/>
<dbReference type="eggNOG" id="COG1615">
    <property type="taxonomic scope" value="Bacteria"/>
</dbReference>
<dbReference type="Proteomes" id="UP000000440">
    <property type="component" value="Chromosome"/>
</dbReference>
<dbReference type="GO" id="GO:0005576">
    <property type="term" value="C:extracellular region"/>
    <property type="evidence" value="ECO:0007669"/>
    <property type="project" value="TreeGrafter"/>
</dbReference>
<dbReference type="GO" id="GO:0005886">
    <property type="term" value="C:plasma membrane"/>
    <property type="evidence" value="ECO:0007669"/>
    <property type="project" value="UniProtKB-SubCell"/>
</dbReference>
<dbReference type="HAMAP" id="MF_01600">
    <property type="entry name" value="UPF0182"/>
    <property type="match status" value="1"/>
</dbReference>
<dbReference type="InterPro" id="IPR005372">
    <property type="entry name" value="UPF0182"/>
</dbReference>
<dbReference type="NCBIfam" id="NF002707">
    <property type="entry name" value="PRK02509.1"/>
    <property type="match status" value="1"/>
</dbReference>
<dbReference type="PANTHER" id="PTHR39344">
    <property type="entry name" value="UPF0182 PROTEIN SLL1060"/>
    <property type="match status" value="1"/>
</dbReference>
<dbReference type="PANTHER" id="PTHR39344:SF1">
    <property type="entry name" value="UPF0182 PROTEIN SLL1060"/>
    <property type="match status" value="1"/>
</dbReference>
<dbReference type="Pfam" id="PF03699">
    <property type="entry name" value="UPF0182"/>
    <property type="match status" value="1"/>
</dbReference>
<reference key="1">
    <citation type="journal article" date="2002" name="DNA Res.">
        <title>Complete genome structure of the thermophilic cyanobacterium Thermosynechococcus elongatus BP-1.</title>
        <authorList>
            <person name="Nakamura Y."/>
            <person name="Kaneko T."/>
            <person name="Sato S."/>
            <person name="Ikeuchi M."/>
            <person name="Katoh H."/>
            <person name="Sasamoto S."/>
            <person name="Watanabe A."/>
            <person name="Iriguchi M."/>
            <person name="Kawashima K."/>
            <person name="Kimura T."/>
            <person name="Kishida Y."/>
            <person name="Kiyokawa C."/>
            <person name="Kohara M."/>
            <person name="Matsumoto M."/>
            <person name="Matsuno A."/>
            <person name="Nakazaki N."/>
            <person name="Shimpo S."/>
            <person name="Sugimoto M."/>
            <person name="Takeuchi C."/>
            <person name="Yamada M."/>
            <person name="Tabata S."/>
        </authorList>
    </citation>
    <scope>NUCLEOTIDE SEQUENCE [LARGE SCALE GENOMIC DNA]</scope>
    <source>
        <strain>NIES-2133 / IAM M-273 / BP-1</strain>
    </source>
</reference>
<feature type="chain" id="PRO_0000157729" description="UPF0182 protein tll1193">
    <location>
        <begin position="1"/>
        <end position="955"/>
    </location>
</feature>
<feature type="transmembrane region" description="Helical" evidence="1">
    <location>
        <begin position="6"/>
        <end position="26"/>
    </location>
</feature>
<feature type="transmembrane region" description="Helical" evidence="1">
    <location>
        <begin position="53"/>
        <end position="73"/>
    </location>
</feature>
<feature type="transmembrane region" description="Helical" evidence="1">
    <location>
        <begin position="98"/>
        <end position="118"/>
    </location>
</feature>
<feature type="transmembrane region" description="Helical" evidence="1">
    <location>
        <begin position="163"/>
        <end position="183"/>
    </location>
</feature>
<feature type="transmembrane region" description="Helical" evidence="1">
    <location>
        <begin position="186"/>
        <end position="206"/>
    </location>
</feature>
<feature type="transmembrane region" description="Helical" evidence="1">
    <location>
        <begin position="240"/>
        <end position="260"/>
    </location>
</feature>
<feature type="transmembrane region" description="Helical" evidence="1">
    <location>
        <begin position="280"/>
        <end position="300"/>
    </location>
</feature>
<feature type="transmembrane region" description="Helical" evidence="1">
    <location>
        <begin position="324"/>
        <end position="344"/>
    </location>
</feature>
<feature type="transmembrane region" description="Helical" evidence="1">
    <location>
        <begin position="354"/>
        <end position="374"/>
    </location>
</feature>